<organism>
    <name type="scientific">Streptomyces lividans</name>
    <dbReference type="NCBI Taxonomy" id="1916"/>
    <lineage>
        <taxon>Bacteria</taxon>
        <taxon>Bacillati</taxon>
        <taxon>Actinomycetota</taxon>
        <taxon>Actinomycetes</taxon>
        <taxon>Kitasatosporales</taxon>
        <taxon>Streptomycetaceae</taxon>
        <taxon>Streptomyces</taxon>
    </lineage>
</organism>
<reference key="1">
    <citation type="journal article" date="1996" name="Gene">
        <title>Cloning and sequencing of the secY homolog from Streptomyces lividans 1326.</title>
        <authorList>
            <person name="Ostiguy S."/>
            <person name="Gilbert M."/>
            <person name="Shareck F."/>
            <person name="Kluepfel D."/>
            <person name="Morosoli R."/>
        </authorList>
    </citation>
    <scope>NUCLEOTIDE SEQUENCE [GENOMIC DNA]</scope>
    <source>
        <strain>66 / 1326</strain>
    </source>
</reference>
<gene>
    <name type="primary">rplO</name>
</gene>
<protein>
    <recommendedName>
        <fullName evidence="2">Large ribosomal subunit protein uL15</fullName>
    </recommendedName>
    <alternativeName>
        <fullName>50S ribosomal protein L15</fullName>
    </alternativeName>
</protein>
<evidence type="ECO:0000250" key="1"/>
<evidence type="ECO:0000305" key="2"/>
<dbReference type="EMBL" id="U27324">
    <property type="protein sequence ID" value="AAC44589.1"/>
    <property type="molecule type" value="Genomic_DNA"/>
</dbReference>
<dbReference type="PIR" id="PC4231">
    <property type="entry name" value="PC4231"/>
</dbReference>
<dbReference type="SMR" id="P49975"/>
<dbReference type="GO" id="GO:1990904">
    <property type="term" value="C:ribonucleoprotein complex"/>
    <property type="evidence" value="ECO:0007669"/>
    <property type="project" value="UniProtKB-KW"/>
</dbReference>
<dbReference type="GO" id="GO:0005840">
    <property type="term" value="C:ribosome"/>
    <property type="evidence" value="ECO:0007669"/>
    <property type="project" value="UniProtKB-KW"/>
</dbReference>
<dbReference type="GO" id="GO:0019843">
    <property type="term" value="F:rRNA binding"/>
    <property type="evidence" value="ECO:0007669"/>
    <property type="project" value="UniProtKB-KW"/>
</dbReference>
<dbReference type="Gene3D" id="3.100.10.10">
    <property type="match status" value="1"/>
</dbReference>
<dbReference type="InterPro" id="IPR021131">
    <property type="entry name" value="Ribosomal_uL15/eL18"/>
</dbReference>
<dbReference type="Pfam" id="PF00828">
    <property type="entry name" value="Ribosomal_L27A"/>
    <property type="match status" value="1"/>
</dbReference>
<feature type="chain" id="PRO_0000104833" description="Large ribosomal subunit protein uL15">
    <location>
        <begin position="1" status="less than"/>
        <end position="29"/>
    </location>
</feature>
<feature type="non-terminal residue">
    <location>
        <position position="1"/>
    </location>
</feature>
<comment type="function">
    <text evidence="1">Binds to the 23S rRNA.</text>
</comment>
<comment type="subunit">
    <text evidence="1">Part of the 50S ribosomal subunit.</text>
</comment>
<comment type="similarity">
    <text evidence="2">Belongs to the universal ribosomal protein uL15 family.</text>
</comment>
<keyword id="KW-0687">Ribonucleoprotein</keyword>
<keyword id="KW-0689">Ribosomal protein</keyword>
<keyword id="KW-0694">RNA-binding</keyword>
<keyword id="KW-0699">rRNA-binding</keyword>
<accession>P49975</accession>
<name>RL15_STRLI</name>
<proteinExistence type="inferred from homology"/>
<sequence length="29" mass="2845">SVALQVTVDAVSGSAKEKITAAGTVTELV</sequence>